<proteinExistence type="inferred from homology"/>
<reference key="1">
    <citation type="submission" date="2008-01" db="EMBL/GenBank/DDBJ databases">
        <title>Complete sequence of Thermoanaerobacter pseudethanolicus 39E.</title>
        <authorList>
            <person name="Copeland A."/>
            <person name="Lucas S."/>
            <person name="Lapidus A."/>
            <person name="Barry K."/>
            <person name="Glavina del Rio T."/>
            <person name="Dalin E."/>
            <person name="Tice H."/>
            <person name="Pitluck S."/>
            <person name="Bruce D."/>
            <person name="Goodwin L."/>
            <person name="Saunders E."/>
            <person name="Brettin T."/>
            <person name="Detter J.C."/>
            <person name="Han C."/>
            <person name="Schmutz J."/>
            <person name="Larimer F."/>
            <person name="Land M."/>
            <person name="Hauser L."/>
            <person name="Kyrpides N."/>
            <person name="Lykidis A."/>
            <person name="Hemme C."/>
            <person name="Fields M.W."/>
            <person name="He Z."/>
            <person name="Zhou J."/>
            <person name="Richardson P."/>
        </authorList>
    </citation>
    <scope>NUCLEOTIDE SEQUENCE [LARGE SCALE GENOMIC DNA]</scope>
    <source>
        <strain>ATCC 33223 / DSM 2355 / 39E</strain>
    </source>
</reference>
<sequence>MIENLVREEIKGFKNYEVHSIPYRYKMDANETPFELPEEVIKNIQEIVKSSQVNVYPDPTAEKLKEELARYCGVVPTNIFVGNGSDEIIHLIMLAFINKGDVVAYPHPSFAMYSVYSKIAGAVEIPVRLREDYNYDVDSFIKVIEKYQPKLVFLCNPNNPTGSVIEREDIIKIIQKSNGIVVVDEAYFEFYGNTIVDVINEFENLIVLRTLSKAFGLAGLRVGYAVANENILKYLNLVKSPYNINSLSQVIALKVLRTGVLKERVNFILKERERLIKELSKIPGIKVYPSKTNFILVKFKDADYVYQGLLERGILVRDFSKVEGLEGALRITVSSCEANDYLINGLKELLL</sequence>
<keyword id="KW-0028">Amino-acid biosynthesis</keyword>
<keyword id="KW-0032">Aminotransferase</keyword>
<keyword id="KW-0368">Histidine biosynthesis</keyword>
<keyword id="KW-0663">Pyridoxal phosphate</keyword>
<keyword id="KW-1185">Reference proteome</keyword>
<keyword id="KW-0808">Transferase</keyword>
<feature type="chain" id="PRO_1000135427" description="Histidinol-phosphate aminotransferase">
    <location>
        <begin position="1"/>
        <end position="351"/>
    </location>
</feature>
<feature type="modified residue" description="N6-(pyridoxal phosphate)lysine" evidence="1">
    <location>
        <position position="213"/>
    </location>
</feature>
<name>HIS8_THEP3</name>
<dbReference type="EC" id="2.6.1.9" evidence="1"/>
<dbReference type="EMBL" id="CP000924">
    <property type="protein sequence ID" value="ABY94182.1"/>
    <property type="molecule type" value="Genomic_DNA"/>
</dbReference>
<dbReference type="RefSeq" id="WP_012269042.1">
    <property type="nucleotide sequence ID" value="NC_010321.1"/>
</dbReference>
<dbReference type="SMR" id="B0K735"/>
<dbReference type="STRING" id="340099.Teth39_0517"/>
<dbReference type="KEGG" id="tpd:Teth39_0517"/>
<dbReference type="eggNOG" id="COG0079">
    <property type="taxonomic scope" value="Bacteria"/>
</dbReference>
<dbReference type="HOGENOM" id="CLU_017584_3_1_9"/>
<dbReference type="UniPathway" id="UPA00031">
    <property type="reaction ID" value="UER00012"/>
</dbReference>
<dbReference type="Proteomes" id="UP000002156">
    <property type="component" value="Chromosome"/>
</dbReference>
<dbReference type="GO" id="GO:0004400">
    <property type="term" value="F:histidinol-phosphate transaminase activity"/>
    <property type="evidence" value="ECO:0007669"/>
    <property type="project" value="UniProtKB-UniRule"/>
</dbReference>
<dbReference type="GO" id="GO:0030170">
    <property type="term" value="F:pyridoxal phosphate binding"/>
    <property type="evidence" value="ECO:0007669"/>
    <property type="project" value="InterPro"/>
</dbReference>
<dbReference type="GO" id="GO:0000105">
    <property type="term" value="P:L-histidine biosynthetic process"/>
    <property type="evidence" value="ECO:0007669"/>
    <property type="project" value="UniProtKB-UniRule"/>
</dbReference>
<dbReference type="CDD" id="cd00609">
    <property type="entry name" value="AAT_like"/>
    <property type="match status" value="1"/>
</dbReference>
<dbReference type="Gene3D" id="3.90.1150.10">
    <property type="entry name" value="Aspartate Aminotransferase, domain 1"/>
    <property type="match status" value="1"/>
</dbReference>
<dbReference type="Gene3D" id="3.40.640.10">
    <property type="entry name" value="Type I PLP-dependent aspartate aminotransferase-like (Major domain)"/>
    <property type="match status" value="1"/>
</dbReference>
<dbReference type="HAMAP" id="MF_01023">
    <property type="entry name" value="HisC_aminotrans_2"/>
    <property type="match status" value="1"/>
</dbReference>
<dbReference type="InterPro" id="IPR001917">
    <property type="entry name" value="Aminotrans_II_pyridoxalP_BS"/>
</dbReference>
<dbReference type="InterPro" id="IPR004839">
    <property type="entry name" value="Aminotransferase_I/II_large"/>
</dbReference>
<dbReference type="InterPro" id="IPR005861">
    <property type="entry name" value="HisP_aminotrans"/>
</dbReference>
<dbReference type="InterPro" id="IPR015424">
    <property type="entry name" value="PyrdxlP-dep_Trfase"/>
</dbReference>
<dbReference type="InterPro" id="IPR015421">
    <property type="entry name" value="PyrdxlP-dep_Trfase_major"/>
</dbReference>
<dbReference type="InterPro" id="IPR015422">
    <property type="entry name" value="PyrdxlP-dep_Trfase_small"/>
</dbReference>
<dbReference type="NCBIfam" id="TIGR01141">
    <property type="entry name" value="hisC"/>
    <property type="match status" value="1"/>
</dbReference>
<dbReference type="PANTHER" id="PTHR42885:SF2">
    <property type="entry name" value="HISTIDINOL-PHOSPHATE AMINOTRANSFERASE"/>
    <property type="match status" value="1"/>
</dbReference>
<dbReference type="PANTHER" id="PTHR42885">
    <property type="entry name" value="HISTIDINOL-PHOSPHATE AMINOTRANSFERASE-RELATED"/>
    <property type="match status" value="1"/>
</dbReference>
<dbReference type="Pfam" id="PF00155">
    <property type="entry name" value="Aminotran_1_2"/>
    <property type="match status" value="1"/>
</dbReference>
<dbReference type="SUPFAM" id="SSF53383">
    <property type="entry name" value="PLP-dependent transferases"/>
    <property type="match status" value="1"/>
</dbReference>
<dbReference type="PROSITE" id="PS00599">
    <property type="entry name" value="AA_TRANSFER_CLASS_2"/>
    <property type="match status" value="1"/>
</dbReference>
<organism>
    <name type="scientific">Thermoanaerobacter pseudethanolicus (strain ATCC 33223 / 39E)</name>
    <name type="common">Clostridium thermohydrosulfuricum</name>
    <dbReference type="NCBI Taxonomy" id="340099"/>
    <lineage>
        <taxon>Bacteria</taxon>
        <taxon>Bacillati</taxon>
        <taxon>Bacillota</taxon>
        <taxon>Clostridia</taxon>
        <taxon>Thermoanaerobacterales</taxon>
        <taxon>Thermoanaerobacteraceae</taxon>
        <taxon>Thermoanaerobacter</taxon>
    </lineage>
</organism>
<protein>
    <recommendedName>
        <fullName evidence="1">Histidinol-phosphate aminotransferase</fullName>
        <ecNumber evidence="1">2.6.1.9</ecNumber>
    </recommendedName>
    <alternativeName>
        <fullName evidence="1">Imidazole acetol-phosphate transaminase</fullName>
    </alternativeName>
</protein>
<evidence type="ECO:0000255" key="1">
    <source>
        <dbReference type="HAMAP-Rule" id="MF_01023"/>
    </source>
</evidence>
<accession>B0K735</accession>
<gene>
    <name evidence="1" type="primary">hisC</name>
    <name type="ordered locus">Teth39_0517</name>
</gene>
<comment type="catalytic activity">
    <reaction evidence="1">
        <text>L-histidinol phosphate + 2-oxoglutarate = 3-(imidazol-4-yl)-2-oxopropyl phosphate + L-glutamate</text>
        <dbReference type="Rhea" id="RHEA:23744"/>
        <dbReference type="ChEBI" id="CHEBI:16810"/>
        <dbReference type="ChEBI" id="CHEBI:29985"/>
        <dbReference type="ChEBI" id="CHEBI:57766"/>
        <dbReference type="ChEBI" id="CHEBI:57980"/>
        <dbReference type="EC" id="2.6.1.9"/>
    </reaction>
</comment>
<comment type="cofactor">
    <cofactor evidence="1">
        <name>pyridoxal 5'-phosphate</name>
        <dbReference type="ChEBI" id="CHEBI:597326"/>
    </cofactor>
</comment>
<comment type="pathway">
    <text evidence="1">Amino-acid biosynthesis; L-histidine biosynthesis; L-histidine from 5-phospho-alpha-D-ribose 1-diphosphate: step 7/9.</text>
</comment>
<comment type="subunit">
    <text evidence="1">Homodimer.</text>
</comment>
<comment type="similarity">
    <text evidence="1">Belongs to the class-II pyridoxal-phosphate-dependent aminotransferase family. Histidinol-phosphate aminotransferase subfamily.</text>
</comment>